<sequence>MLEARDLHCERDERTLFSGLSFTVDAGEWVQVTGGNGAGKTTLLRLLTGLARPDGGEVYWQGEPLRRVRDSFHRSLLWIGHQPGIKTRLTARENLHFFHPGDGARLPEALAQAGLAGFEDVPVARLSAGQQRRVALARLWLTRAALWVLDEPFTAIDVNGVARLTRRMAAHTAQGGMVILTTHQPLPGAADTVRRLALTGGEAGL</sequence>
<proteinExistence type="inferred from homology"/>
<name>CCMA2_SALPA</name>
<comment type="function">
    <text evidence="1">Part of the ABC transporter complex CcmAB involved in the biogenesis of c-type cytochromes; once thought to export heme, this seems not to be the case, but its exact role is uncertain. Responsible for energy coupling to the transport system.</text>
</comment>
<comment type="catalytic activity">
    <reaction evidence="1">
        <text>heme b(in) + ATP + H2O = heme b(out) + ADP + phosphate + H(+)</text>
        <dbReference type="Rhea" id="RHEA:19261"/>
        <dbReference type="ChEBI" id="CHEBI:15377"/>
        <dbReference type="ChEBI" id="CHEBI:15378"/>
        <dbReference type="ChEBI" id="CHEBI:30616"/>
        <dbReference type="ChEBI" id="CHEBI:43474"/>
        <dbReference type="ChEBI" id="CHEBI:60344"/>
        <dbReference type="ChEBI" id="CHEBI:456216"/>
        <dbReference type="EC" id="7.6.2.5"/>
    </reaction>
</comment>
<comment type="subunit">
    <text evidence="1">The complex is composed of two ATP-binding proteins (CcmA) and two transmembrane proteins (CcmB).</text>
</comment>
<comment type="subcellular location">
    <subcellularLocation>
        <location evidence="1">Cell inner membrane</location>
        <topology evidence="1">Peripheral membrane protein</topology>
    </subcellularLocation>
</comment>
<comment type="similarity">
    <text evidence="1">Belongs to the ABC transporter superfamily. CcmA exporter (TC 3.A.1.107) family.</text>
</comment>
<gene>
    <name evidence="1" type="primary">ccmA2</name>
    <name type="ordered locus">SPA3669</name>
</gene>
<accession>Q5PKT6</accession>
<feature type="chain" id="PRO_0000092210" description="Cytochrome c biogenesis ATP-binding export protein CcmA 2">
    <location>
        <begin position="1"/>
        <end position="205"/>
    </location>
</feature>
<feature type="domain" description="ABC transporter" evidence="1">
    <location>
        <begin position="2"/>
        <end position="205"/>
    </location>
</feature>
<feature type="binding site" evidence="1">
    <location>
        <begin position="34"/>
        <end position="41"/>
    </location>
    <ligand>
        <name>ATP</name>
        <dbReference type="ChEBI" id="CHEBI:30616"/>
    </ligand>
</feature>
<reference key="1">
    <citation type="journal article" date="2004" name="Nat. Genet.">
        <title>Comparison of genome degradation in Paratyphi A and Typhi, human-restricted serovars of Salmonella enterica that cause typhoid.</title>
        <authorList>
            <person name="McClelland M."/>
            <person name="Sanderson K.E."/>
            <person name="Clifton S.W."/>
            <person name="Latreille P."/>
            <person name="Porwollik S."/>
            <person name="Sabo A."/>
            <person name="Meyer R."/>
            <person name="Bieri T."/>
            <person name="Ozersky P."/>
            <person name="McLellan M."/>
            <person name="Harkins C.R."/>
            <person name="Wang C."/>
            <person name="Nguyen C."/>
            <person name="Berghoff A."/>
            <person name="Elliott G."/>
            <person name="Kohlberg S."/>
            <person name="Strong C."/>
            <person name="Du F."/>
            <person name="Carter J."/>
            <person name="Kremizki C."/>
            <person name="Layman D."/>
            <person name="Leonard S."/>
            <person name="Sun H."/>
            <person name="Fulton L."/>
            <person name="Nash W."/>
            <person name="Miner T."/>
            <person name="Minx P."/>
            <person name="Delehaunty K."/>
            <person name="Fronick C."/>
            <person name="Magrini V."/>
            <person name="Nhan M."/>
            <person name="Warren W."/>
            <person name="Florea L."/>
            <person name="Spieth J."/>
            <person name="Wilson R.K."/>
        </authorList>
    </citation>
    <scope>NUCLEOTIDE SEQUENCE [LARGE SCALE GENOMIC DNA]</scope>
    <source>
        <strain>ATCC 9150 / SARB42</strain>
    </source>
</reference>
<keyword id="KW-0067">ATP-binding</keyword>
<keyword id="KW-0997">Cell inner membrane</keyword>
<keyword id="KW-1003">Cell membrane</keyword>
<keyword id="KW-0201">Cytochrome c-type biogenesis</keyword>
<keyword id="KW-0472">Membrane</keyword>
<keyword id="KW-0547">Nucleotide-binding</keyword>
<keyword id="KW-1278">Translocase</keyword>
<keyword id="KW-0813">Transport</keyword>
<dbReference type="EC" id="7.6.2.5" evidence="1"/>
<dbReference type="EMBL" id="CP000026">
    <property type="protein sequence ID" value="AAV79462.1"/>
    <property type="molecule type" value="Genomic_DNA"/>
</dbReference>
<dbReference type="SMR" id="Q5PKT6"/>
<dbReference type="KEGG" id="spt:SPA3669"/>
<dbReference type="HOGENOM" id="CLU_000604_1_2_6"/>
<dbReference type="Proteomes" id="UP000008185">
    <property type="component" value="Chromosome"/>
</dbReference>
<dbReference type="GO" id="GO:0005886">
    <property type="term" value="C:plasma membrane"/>
    <property type="evidence" value="ECO:0007669"/>
    <property type="project" value="UniProtKB-SubCell"/>
</dbReference>
<dbReference type="GO" id="GO:0015439">
    <property type="term" value="F:ABC-type heme transporter activity"/>
    <property type="evidence" value="ECO:0007669"/>
    <property type="project" value="UniProtKB-EC"/>
</dbReference>
<dbReference type="GO" id="GO:0005524">
    <property type="term" value="F:ATP binding"/>
    <property type="evidence" value="ECO:0007669"/>
    <property type="project" value="UniProtKB-KW"/>
</dbReference>
<dbReference type="GO" id="GO:0016887">
    <property type="term" value="F:ATP hydrolysis activity"/>
    <property type="evidence" value="ECO:0007669"/>
    <property type="project" value="InterPro"/>
</dbReference>
<dbReference type="GO" id="GO:0017004">
    <property type="term" value="P:cytochrome complex assembly"/>
    <property type="evidence" value="ECO:0007669"/>
    <property type="project" value="UniProtKB-KW"/>
</dbReference>
<dbReference type="CDD" id="cd03231">
    <property type="entry name" value="ABC_CcmA_heme_exporter"/>
    <property type="match status" value="1"/>
</dbReference>
<dbReference type="Gene3D" id="3.40.50.300">
    <property type="entry name" value="P-loop containing nucleotide triphosphate hydrolases"/>
    <property type="match status" value="1"/>
</dbReference>
<dbReference type="InterPro" id="IPR003593">
    <property type="entry name" value="AAA+_ATPase"/>
</dbReference>
<dbReference type="InterPro" id="IPR003439">
    <property type="entry name" value="ABC_transporter-like_ATP-bd"/>
</dbReference>
<dbReference type="InterPro" id="IPR017871">
    <property type="entry name" value="ABC_transporter-like_CS"/>
</dbReference>
<dbReference type="InterPro" id="IPR005895">
    <property type="entry name" value="ABC_transptr_haem_export_CcmA"/>
</dbReference>
<dbReference type="InterPro" id="IPR027417">
    <property type="entry name" value="P-loop_NTPase"/>
</dbReference>
<dbReference type="NCBIfam" id="TIGR01189">
    <property type="entry name" value="ccmA"/>
    <property type="match status" value="1"/>
</dbReference>
<dbReference type="NCBIfam" id="NF010061">
    <property type="entry name" value="PRK13538.1"/>
    <property type="match status" value="1"/>
</dbReference>
<dbReference type="PANTHER" id="PTHR43499">
    <property type="entry name" value="ABC TRANSPORTER I FAMILY MEMBER 1"/>
    <property type="match status" value="1"/>
</dbReference>
<dbReference type="PANTHER" id="PTHR43499:SF1">
    <property type="entry name" value="ABC TRANSPORTER I FAMILY MEMBER 1"/>
    <property type="match status" value="1"/>
</dbReference>
<dbReference type="Pfam" id="PF00005">
    <property type="entry name" value="ABC_tran"/>
    <property type="match status" value="1"/>
</dbReference>
<dbReference type="SMART" id="SM00382">
    <property type="entry name" value="AAA"/>
    <property type="match status" value="1"/>
</dbReference>
<dbReference type="SUPFAM" id="SSF52540">
    <property type="entry name" value="P-loop containing nucleoside triphosphate hydrolases"/>
    <property type="match status" value="1"/>
</dbReference>
<dbReference type="PROSITE" id="PS00211">
    <property type="entry name" value="ABC_TRANSPORTER_1"/>
    <property type="match status" value="1"/>
</dbReference>
<dbReference type="PROSITE" id="PS50893">
    <property type="entry name" value="ABC_TRANSPORTER_2"/>
    <property type="match status" value="1"/>
</dbReference>
<dbReference type="PROSITE" id="PS51243">
    <property type="entry name" value="CCMA"/>
    <property type="match status" value="1"/>
</dbReference>
<evidence type="ECO:0000255" key="1">
    <source>
        <dbReference type="HAMAP-Rule" id="MF_01707"/>
    </source>
</evidence>
<organism>
    <name type="scientific">Salmonella paratyphi A (strain ATCC 9150 / SARB42)</name>
    <dbReference type="NCBI Taxonomy" id="295319"/>
    <lineage>
        <taxon>Bacteria</taxon>
        <taxon>Pseudomonadati</taxon>
        <taxon>Pseudomonadota</taxon>
        <taxon>Gammaproteobacteria</taxon>
        <taxon>Enterobacterales</taxon>
        <taxon>Enterobacteriaceae</taxon>
        <taxon>Salmonella</taxon>
    </lineage>
</organism>
<protein>
    <recommendedName>
        <fullName evidence="1">Cytochrome c biogenesis ATP-binding export protein CcmA 2</fullName>
        <ecNumber evidence="1">7.6.2.5</ecNumber>
    </recommendedName>
    <alternativeName>
        <fullName evidence="1">Heme exporter protein A 2</fullName>
    </alternativeName>
</protein>